<comment type="function">
    <text evidence="1">Catalyzes the reductive methylation of 2'-deoxyuridine-5'-monophosphate (dUMP) to 2'-deoxythymidine-5'-monophosphate (dTMP) while utilizing 5,10-methylenetetrahydrofolate (mTHF) as the methyl donor and reductant in the reaction, yielding dihydrofolate (DHF) as a by-product. This enzymatic reaction provides an intracellular de novo source of dTMP, an essential precursor for DNA biosynthesis.</text>
</comment>
<comment type="catalytic activity">
    <reaction evidence="1">
        <text>dUMP + (6R)-5,10-methylene-5,6,7,8-tetrahydrofolate = 7,8-dihydrofolate + dTMP</text>
        <dbReference type="Rhea" id="RHEA:12104"/>
        <dbReference type="ChEBI" id="CHEBI:15636"/>
        <dbReference type="ChEBI" id="CHEBI:57451"/>
        <dbReference type="ChEBI" id="CHEBI:63528"/>
        <dbReference type="ChEBI" id="CHEBI:246422"/>
        <dbReference type="EC" id="2.1.1.45"/>
    </reaction>
</comment>
<comment type="pathway">
    <text evidence="1">Pyrimidine metabolism; dTTP biosynthesis.</text>
</comment>
<comment type="subunit">
    <text evidence="1">Homodimer.</text>
</comment>
<comment type="subcellular location">
    <subcellularLocation>
        <location evidence="1">Cytoplasm</location>
    </subcellularLocation>
</comment>
<comment type="similarity">
    <text evidence="1">Belongs to the thymidylate synthase family. Bacterial-type ThyA subfamily.</text>
</comment>
<accession>A1UEU8</accession>
<evidence type="ECO:0000255" key="1">
    <source>
        <dbReference type="HAMAP-Rule" id="MF_00008"/>
    </source>
</evidence>
<reference key="1">
    <citation type="submission" date="2006-12" db="EMBL/GenBank/DDBJ databases">
        <title>Complete sequence of chromosome of Mycobacterium sp. KMS.</title>
        <authorList>
            <consortium name="US DOE Joint Genome Institute"/>
            <person name="Copeland A."/>
            <person name="Lucas S."/>
            <person name="Lapidus A."/>
            <person name="Barry K."/>
            <person name="Detter J.C."/>
            <person name="Glavina del Rio T."/>
            <person name="Hammon N."/>
            <person name="Israni S."/>
            <person name="Dalin E."/>
            <person name="Tice H."/>
            <person name="Pitluck S."/>
            <person name="Kiss H."/>
            <person name="Brettin T."/>
            <person name="Bruce D."/>
            <person name="Han C."/>
            <person name="Tapia R."/>
            <person name="Gilna P."/>
            <person name="Schmutz J."/>
            <person name="Larimer F."/>
            <person name="Land M."/>
            <person name="Hauser L."/>
            <person name="Kyrpides N."/>
            <person name="Mikhailova N."/>
            <person name="Miller C.D."/>
            <person name="Richardson P."/>
        </authorList>
    </citation>
    <scope>NUCLEOTIDE SEQUENCE [LARGE SCALE GENOMIC DNA]</scope>
    <source>
        <strain>KMS</strain>
    </source>
</reference>
<gene>
    <name evidence="1" type="primary">thyA</name>
    <name type="ordered locus">Mkms_2158</name>
</gene>
<keyword id="KW-0963">Cytoplasm</keyword>
<keyword id="KW-0489">Methyltransferase</keyword>
<keyword id="KW-0545">Nucleotide biosynthesis</keyword>
<keyword id="KW-0808">Transferase</keyword>
<feature type="chain" id="PRO_1000000632" description="Thymidylate synthase">
    <location>
        <begin position="1"/>
        <end position="266"/>
    </location>
</feature>
<feature type="active site" description="Nucleophile" evidence="1">
    <location>
        <position position="149"/>
    </location>
</feature>
<feature type="binding site" description="in other chain" evidence="1">
    <location>
        <position position="24"/>
    </location>
    <ligand>
        <name>dUMP</name>
        <dbReference type="ChEBI" id="CHEBI:246422"/>
        <note>ligand shared between dimeric partners</note>
    </ligand>
</feature>
<feature type="binding site" evidence="1">
    <location>
        <position position="54"/>
    </location>
    <ligand>
        <name>(6R)-5,10-methylene-5,6,7,8-tetrahydrofolate</name>
        <dbReference type="ChEBI" id="CHEBI:15636"/>
    </ligand>
</feature>
<feature type="binding site" evidence="1">
    <location>
        <begin position="129"/>
        <end position="130"/>
    </location>
    <ligand>
        <name>dUMP</name>
        <dbReference type="ChEBI" id="CHEBI:246422"/>
        <note>ligand shared between dimeric partners</note>
    </ligand>
</feature>
<feature type="binding site" description="in other chain" evidence="1">
    <location>
        <begin position="169"/>
        <end position="172"/>
    </location>
    <ligand>
        <name>dUMP</name>
        <dbReference type="ChEBI" id="CHEBI:246422"/>
        <note>ligand shared between dimeric partners</note>
    </ligand>
</feature>
<feature type="binding site" evidence="1">
    <location>
        <position position="172"/>
    </location>
    <ligand>
        <name>(6R)-5,10-methylene-5,6,7,8-tetrahydrofolate</name>
        <dbReference type="ChEBI" id="CHEBI:15636"/>
    </ligand>
</feature>
<feature type="binding site" description="in other chain" evidence="1">
    <location>
        <position position="180"/>
    </location>
    <ligand>
        <name>dUMP</name>
        <dbReference type="ChEBI" id="CHEBI:246422"/>
        <note>ligand shared between dimeric partners</note>
    </ligand>
</feature>
<feature type="binding site" description="in other chain" evidence="1">
    <location>
        <begin position="210"/>
        <end position="212"/>
    </location>
    <ligand>
        <name>dUMP</name>
        <dbReference type="ChEBI" id="CHEBI:246422"/>
        <note>ligand shared between dimeric partners</note>
    </ligand>
</feature>
<feature type="binding site" evidence="1">
    <location>
        <position position="265"/>
    </location>
    <ligand>
        <name>(6R)-5,10-methylene-5,6,7,8-tetrahydrofolate</name>
        <dbReference type="ChEBI" id="CHEBI:15636"/>
    </ligand>
</feature>
<protein>
    <recommendedName>
        <fullName evidence="1">Thymidylate synthase</fullName>
        <shortName evidence="1">TS</shortName>
        <shortName evidence="1">TSase</shortName>
        <ecNumber evidence="1">2.1.1.45</ecNumber>
    </recommendedName>
</protein>
<proteinExistence type="inferred from homology"/>
<sequence length="266" mass="30038">MPIPTPYEDLLRLVFERGTPKSDRTGTGTRSLFGHQMRYDLAAGFPLITTKKVHLKSVVYELLWFLRGESNVRWLQEHGVTIWDEWASETGELGPVYGVQWRSWPTPSGGHVDQISAAVDLLRTDPDSRRNIVSAWNVGEIPQMALPPCHAFFQFYVADGRLSCQLYQRSADLFLGVPFNIASYALLTHMMAAQAGLGVGEFVWTGGDCHIYDNHVEQVTEQLSRDPRPYPELVLAQRDSIFDYTYEDVVVKNYDPHPAIKAPVAV</sequence>
<organism>
    <name type="scientific">Mycobacterium sp. (strain KMS)</name>
    <dbReference type="NCBI Taxonomy" id="189918"/>
    <lineage>
        <taxon>Bacteria</taxon>
        <taxon>Bacillati</taxon>
        <taxon>Actinomycetota</taxon>
        <taxon>Actinomycetes</taxon>
        <taxon>Mycobacteriales</taxon>
        <taxon>Mycobacteriaceae</taxon>
        <taxon>Mycobacterium</taxon>
    </lineage>
</organism>
<dbReference type="EC" id="2.1.1.45" evidence="1"/>
<dbReference type="EMBL" id="CP000518">
    <property type="protein sequence ID" value="ABL91356.1"/>
    <property type="molecule type" value="Genomic_DNA"/>
</dbReference>
<dbReference type="SMR" id="A1UEU8"/>
<dbReference type="STRING" id="189918.Mkms_2158"/>
<dbReference type="KEGG" id="mkm:Mkms_2158"/>
<dbReference type="HOGENOM" id="CLU_021669_0_0_11"/>
<dbReference type="OrthoDB" id="9774633at2"/>
<dbReference type="UniPathway" id="UPA00575"/>
<dbReference type="GO" id="GO:0005829">
    <property type="term" value="C:cytosol"/>
    <property type="evidence" value="ECO:0007669"/>
    <property type="project" value="TreeGrafter"/>
</dbReference>
<dbReference type="GO" id="GO:0004799">
    <property type="term" value="F:thymidylate synthase activity"/>
    <property type="evidence" value="ECO:0007669"/>
    <property type="project" value="UniProtKB-UniRule"/>
</dbReference>
<dbReference type="GO" id="GO:0006231">
    <property type="term" value="P:dTMP biosynthetic process"/>
    <property type="evidence" value="ECO:0007669"/>
    <property type="project" value="UniProtKB-UniRule"/>
</dbReference>
<dbReference type="GO" id="GO:0006235">
    <property type="term" value="P:dTTP biosynthetic process"/>
    <property type="evidence" value="ECO:0007669"/>
    <property type="project" value="UniProtKB-UniRule"/>
</dbReference>
<dbReference type="GO" id="GO:0032259">
    <property type="term" value="P:methylation"/>
    <property type="evidence" value="ECO:0007669"/>
    <property type="project" value="UniProtKB-KW"/>
</dbReference>
<dbReference type="CDD" id="cd00351">
    <property type="entry name" value="TS_Pyrimidine_HMase"/>
    <property type="match status" value="1"/>
</dbReference>
<dbReference type="FunFam" id="3.30.572.10:FF:000001">
    <property type="entry name" value="Thymidylate synthase"/>
    <property type="match status" value="1"/>
</dbReference>
<dbReference type="Gene3D" id="3.30.572.10">
    <property type="entry name" value="Thymidylate synthase/dCMP hydroxymethylase domain"/>
    <property type="match status" value="1"/>
</dbReference>
<dbReference type="HAMAP" id="MF_00008">
    <property type="entry name" value="Thymidy_synth_bact"/>
    <property type="match status" value="1"/>
</dbReference>
<dbReference type="InterPro" id="IPR045097">
    <property type="entry name" value="Thymidate_synth/dCMP_Mease"/>
</dbReference>
<dbReference type="InterPro" id="IPR023451">
    <property type="entry name" value="Thymidate_synth/dCMP_Mease_dom"/>
</dbReference>
<dbReference type="InterPro" id="IPR036926">
    <property type="entry name" value="Thymidate_synth/dCMP_Mease_sf"/>
</dbReference>
<dbReference type="InterPro" id="IPR000398">
    <property type="entry name" value="Thymidylate_synthase"/>
</dbReference>
<dbReference type="InterPro" id="IPR020940">
    <property type="entry name" value="Thymidylate_synthase_AS"/>
</dbReference>
<dbReference type="NCBIfam" id="NF002497">
    <property type="entry name" value="PRK01827.1-3"/>
    <property type="match status" value="1"/>
</dbReference>
<dbReference type="NCBIfam" id="NF002499">
    <property type="entry name" value="PRK01827.1-5"/>
    <property type="match status" value="1"/>
</dbReference>
<dbReference type="NCBIfam" id="TIGR03284">
    <property type="entry name" value="thym_sym"/>
    <property type="match status" value="2"/>
</dbReference>
<dbReference type="PANTHER" id="PTHR11548:SF9">
    <property type="entry name" value="THYMIDYLATE SYNTHASE"/>
    <property type="match status" value="1"/>
</dbReference>
<dbReference type="PANTHER" id="PTHR11548">
    <property type="entry name" value="THYMIDYLATE SYNTHASE 1"/>
    <property type="match status" value="1"/>
</dbReference>
<dbReference type="Pfam" id="PF00303">
    <property type="entry name" value="Thymidylat_synt"/>
    <property type="match status" value="1"/>
</dbReference>
<dbReference type="PRINTS" id="PR00108">
    <property type="entry name" value="THYMDSNTHASE"/>
</dbReference>
<dbReference type="SUPFAM" id="SSF55831">
    <property type="entry name" value="Thymidylate synthase/dCMP hydroxymethylase"/>
    <property type="match status" value="1"/>
</dbReference>
<dbReference type="PROSITE" id="PS00091">
    <property type="entry name" value="THYMIDYLATE_SYNTHASE"/>
    <property type="match status" value="1"/>
</dbReference>
<name>TYSY_MYCSK</name>